<reference key="1">
    <citation type="submission" date="2005-06" db="EMBL/GenBank/DDBJ databases">
        <title>DNA sequences of macaque genes expressed in brain or testis and its evolutionary implications.</title>
        <authorList>
            <consortium name="International consortium for macaque cDNA sequencing and analysis"/>
        </authorList>
    </citation>
    <scope>NUCLEOTIDE SEQUENCE [LARGE SCALE MRNA]</scope>
    <source>
        <tissue>Temporal cortex</tissue>
    </source>
</reference>
<protein>
    <recommendedName>
        <fullName>Heat shock protein HSP 90-alpha</fullName>
        <ecNumber evidence="2">3.6.4.10</ecNumber>
    </recommendedName>
</protein>
<accession>Q4R4P1</accession>
<gene>
    <name type="primary">HSP90AA1</name>
    <name type="ORF">QtrA-10430</name>
</gene>
<name>HS90A_MACFA</name>
<dbReference type="EC" id="3.6.4.10" evidence="2"/>
<dbReference type="EMBL" id="AB169853">
    <property type="protein sequence ID" value="BAE01934.1"/>
    <property type="molecule type" value="mRNA"/>
</dbReference>
<dbReference type="RefSeq" id="NP_001270868.1">
    <property type="nucleotide sequence ID" value="NM_001283939.1"/>
</dbReference>
<dbReference type="RefSeq" id="XP_045253573.1">
    <property type="nucleotide sequence ID" value="XM_045397638.2"/>
</dbReference>
<dbReference type="SMR" id="Q4R4P1"/>
<dbReference type="STRING" id="9541.ENSMFAP00000032600"/>
<dbReference type="Ensembl" id="ENSMFAT00000006767.2">
    <property type="protein sequence ID" value="ENSMFAP00000032546.2"/>
    <property type="gene ID" value="ENSMFAG00000037140.2"/>
</dbReference>
<dbReference type="GeneID" id="101866865"/>
<dbReference type="eggNOG" id="KOG0019">
    <property type="taxonomic scope" value="Eukaryota"/>
</dbReference>
<dbReference type="GeneTree" id="ENSGT01020000230401"/>
<dbReference type="Proteomes" id="UP000233100">
    <property type="component" value="Chromosome 7"/>
</dbReference>
<dbReference type="Bgee" id="ENSMFAG00000037140">
    <property type="expression patterns" value="Expressed in temporal lobe and 13 other cell types or tissues"/>
</dbReference>
<dbReference type="GO" id="GO:0044295">
    <property type="term" value="C:axonal growth cone"/>
    <property type="evidence" value="ECO:0007669"/>
    <property type="project" value="Ensembl"/>
</dbReference>
<dbReference type="GO" id="GO:0005737">
    <property type="term" value="C:cytoplasm"/>
    <property type="evidence" value="ECO:0000250"/>
    <property type="project" value="AgBase"/>
</dbReference>
<dbReference type="GO" id="GO:0005829">
    <property type="term" value="C:cytosol"/>
    <property type="evidence" value="ECO:0007669"/>
    <property type="project" value="Ensembl"/>
</dbReference>
<dbReference type="GO" id="GO:0044294">
    <property type="term" value="C:dendritic growth cone"/>
    <property type="evidence" value="ECO:0007669"/>
    <property type="project" value="Ensembl"/>
</dbReference>
<dbReference type="GO" id="GO:0042470">
    <property type="term" value="C:melanosome"/>
    <property type="evidence" value="ECO:0007669"/>
    <property type="project" value="UniProtKB-SubCell"/>
</dbReference>
<dbReference type="GO" id="GO:0005739">
    <property type="term" value="C:mitochondrion"/>
    <property type="evidence" value="ECO:0000250"/>
    <property type="project" value="UniProtKB"/>
</dbReference>
<dbReference type="GO" id="GO:0043025">
    <property type="term" value="C:neuronal cell body"/>
    <property type="evidence" value="ECO:0007669"/>
    <property type="project" value="Ensembl"/>
</dbReference>
<dbReference type="GO" id="GO:0005654">
    <property type="term" value="C:nucleoplasm"/>
    <property type="evidence" value="ECO:0007669"/>
    <property type="project" value="Ensembl"/>
</dbReference>
<dbReference type="GO" id="GO:0005634">
    <property type="term" value="C:nucleus"/>
    <property type="evidence" value="ECO:0000250"/>
    <property type="project" value="AgBase"/>
</dbReference>
<dbReference type="GO" id="GO:0048471">
    <property type="term" value="C:perinuclear region of cytoplasm"/>
    <property type="evidence" value="ECO:0007669"/>
    <property type="project" value="Ensembl"/>
</dbReference>
<dbReference type="GO" id="GO:0005886">
    <property type="term" value="C:plasma membrane"/>
    <property type="evidence" value="ECO:0007669"/>
    <property type="project" value="UniProtKB-SubCell"/>
</dbReference>
<dbReference type="GO" id="GO:0032991">
    <property type="term" value="C:protein-containing complex"/>
    <property type="evidence" value="ECO:0007669"/>
    <property type="project" value="Ensembl"/>
</dbReference>
<dbReference type="GO" id="GO:0005524">
    <property type="term" value="F:ATP binding"/>
    <property type="evidence" value="ECO:0000250"/>
    <property type="project" value="UniProtKB"/>
</dbReference>
<dbReference type="GO" id="GO:0016887">
    <property type="term" value="F:ATP hydrolysis activity"/>
    <property type="evidence" value="ECO:0007669"/>
    <property type="project" value="Ensembl"/>
</dbReference>
<dbReference type="GO" id="GO:0140662">
    <property type="term" value="F:ATP-dependent protein folding chaperone"/>
    <property type="evidence" value="ECO:0007669"/>
    <property type="project" value="InterPro"/>
</dbReference>
<dbReference type="GO" id="GO:0097718">
    <property type="term" value="F:disordered domain specific binding"/>
    <property type="evidence" value="ECO:0007669"/>
    <property type="project" value="Ensembl"/>
</dbReference>
<dbReference type="GO" id="GO:0070182">
    <property type="term" value="F:DNA polymerase binding"/>
    <property type="evidence" value="ECO:0007669"/>
    <property type="project" value="Ensembl"/>
</dbReference>
<dbReference type="GO" id="GO:0051020">
    <property type="term" value="F:GTPase binding"/>
    <property type="evidence" value="ECO:0007669"/>
    <property type="project" value="Ensembl"/>
</dbReference>
<dbReference type="GO" id="GO:0042826">
    <property type="term" value="F:histone deacetylase binding"/>
    <property type="evidence" value="ECO:0007669"/>
    <property type="project" value="Ensembl"/>
</dbReference>
<dbReference type="GO" id="GO:0030235">
    <property type="term" value="F:nitric-oxide synthase regulator activity"/>
    <property type="evidence" value="ECO:0007669"/>
    <property type="project" value="Ensembl"/>
</dbReference>
<dbReference type="GO" id="GO:0042803">
    <property type="term" value="F:protein homodimerization activity"/>
    <property type="evidence" value="ECO:0007669"/>
    <property type="project" value="Ensembl"/>
</dbReference>
<dbReference type="GO" id="GO:1990782">
    <property type="term" value="F:protein tyrosine kinase binding"/>
    <property type="evidence" value="ECO:0007669"/>
    <property type="project" value="Ensembl"/>
</dbReference>
<dbReference type="GO" id="GO:0097110">
    <property type="term" value="F:scaffold protein binding"/>
    <property type="evidence" value="ECO:0007669"/>
    <property type="project" value="Ensembl"/>
</dbReference>
<dbReference type="GO" id="GO:0048156">
    <property type="term" value="F:tau protein binding"/>
    <property type="evidence" value="ECO:0007669"/>
    <property type="project" value="Ensembl"/>
</dbReference>
<dbReference type="GO" id="GO:0030911">
    <property type="term" value="F:TPR domain binding"/>
    <property type="evidence" value="ECO:0007669"/>
    <property type="project" value="Ensembl"/>
</dbReference>
<dbReference type="GO" id="GO:0031625">
    <property type="term" value="F:ubiquitin protein ligase binding"/>
    <property type="evidence" value="ECO:0007669"/>
    <property type="project" value="Ensembl"/>
</dbReference>
<dbReference type="GO" id="GO:0051082">
    <property type="term" value="F:unfolded protein binding"/>
    <property type="evidence" value="ECO:0007669"/>
    <property type="project" value="InterPro"/>
</dbReference>
<dbReference type="GO" id="GO:0002218">
    <property type="term" value="P:activation of innate immune response"/>
    <property type="evidence" value="ECO:0000250"/>
    <property type="project" value="UniProtKB"/>
</dbReference>
<dbReference type="GO" id="GO:0034605">
    <property type="term" value="P:cellular response to heat"/>
    <property type="evidence" value="ECO:0007669"/>
    <property type="project" value="Ensembl"/>
</dbReference>
<dbReference type="GO" id="GO:0098586">
    <property type="term" value="P:cellular response to virus"/>
    <property type="evidence" value="ECO:0000250"/>
    <property type="project" value="UniProtKB"/>
</dbReference>
<dbReference type="GO" id="GO:0051131">
    <property type="term" value="P:chaperone-mediated protein complex assembly"/>
    <property type="evidence" value="ECO:0007669"/>
    <property type="project" value="Ensembl"/>
</dbReference>
<dbReference type="GO" id="GO:1902988">
    <property type="term" value="P:neurofibrillary tangle assembly"/>
    <property type="evidence" value="ECO:0007669"/>
    <property type="project" value="Ensembl"/>
</dbReference>
<dbReference type="GO" id="GO:0002230">
    <property type="term" value="P:positive regulation of defense response to virus by host"/>
    <property type="evidence" value="ECO:0000250"/>
    <property type="project" value="UniProtKB"/>
</dbReference>
<dbReference type="GO" id="GO:0032728">
    <property type="term" value="P:positive regulation of interferon-beta production"/>
    <property type="evidence" value="ECO:0000250"/>
    <property type="project" value="UniProtKB"/>
</dbReference>
<dbReference type="GO" id="GO:0045429">
    <property type="term" value="P:positive regulation of nitric oxide biosynthetic process"/>
    <property type="evidence" value="ECO:0007669"/>
    <property type="project" value="Ensembl"/>
</dbReference>
<dbReference type="GO" id="GO:0045732">
    <property type="term" value="P:positive regulation of protein catabolic process"/>
    <property type="evidence" value="ECO:0007669"/>
    <property type="project" value="Ensembl"/>
</dbReference>
<dbReference type="GO" id="GO:0032273">
    <property type="term" value="P:positive regulation of protein polymerization"/>
    <property type="evidence" value="ECO:0007669"/>
    <property type="project" value="Ensembl"/>
</dbReference>
<dbReference type="GO" id="GO:0045040">
    <property type="term" value="P:protein insertion into mitochondrial outer membrane"/>
    <property type="evidence" value="ECO:0007669"/>
    <property type="project" value="Ensembl"/>
</dbReference>
<dbReference type="GO" id="GO:0050821">
    <property type="term" value="P:protein stabilization"/>
    <property type="evidence" value="ECO:0007669"/>
    <property type="project" value="Ensembl"/>
</dbReference>
<dbReference type="GO" id="GO:0042981">
    <property type="term" value="P:regulation of apoptotic process"/>
    <property type="evidence" value="ECO:0000250"/>
    <property type="project" value="UniProtKB"/>
</dbReference>
<dbReference type="GO" id="GO:0032880">
    <property type="term" value="P:regulation of protein localization"/>
    <property type="evidence" value="ECO:0007669"/>
    <property type="project" value="Ensembl"/>
</dbReference>
<dbReference type="GO" id="GO:0031396">
    <property type="term" value="P:regulation of protein ubiquitination"/>
    <property type="evidence" value="ECO:0007669"/>
    <property type="project" value="Ensembl"/>
</dbReference>
<dbReference type="GO" id="GO:0046677">
    <property type="term" value="P:response to antibiotic"/>
    <property type="evidence" value="ECO:0000250"/>
    <property type="project" value="AgBase"/>
</dbReference>
<dbReference type="GO" id="GO:0009409">
    <property type="term" value="P:response to cold"/>
    <property type="evidence" value="ECO:0000250"/>
    <property type="project" value="AgBase"/>
</dbReference>
<dbReference type="GO" id="GO:0009408">
    <property type="term" value="P:response to heat"/>
    <property type="evidence" value="ECO:0000250"/>
    <property type="project" value="AgBase"/>
</dbReference>
<dbReference type="GO" id="GO:1905323">
    <property type="term" value="P:telomerase holoenzyme complex assembly"/>
    <property type="evidence" value="ECO:0007669"/>
    <property type="project" value="Ensembl"/>
</dbReference>
<dbReference type="GO" id="GO:0007004">
    <property type="term" value="P:telomere maintenance via telomerase"/>
    <property type="evidence" value="ECO:0007669"/>
    <property type="project" value="Ensembl"/>
</dbReference>
<dbReference type="CDD" id="cd16927">
    <property type="entry name" value="HATPase_Hsp90-like"/>
    <property type="match status" value="1"/>
</dbReference>
<dbReference type="FunFam" id="1.20.120.790:FF:000001">
    <property type="entry name" value="Heat shock protein 90 alpha"/>
    <property type="match status" value="1"/>
</dbReference>
<dbReference type="FunFam" id="3.30.230.80:FF:000001">
    <property type="entry name" value="Heat shock protein 90 alpha"/>
    <property type="match status" value="1"/>
</dbReference>
<dbReference type="FunFam" id="3.40.50.11260:FF:000001">
    <property type="entry name" value="Heat shock protein 90 alpha"/>
    <property type="match status" value="1"/>
</dbReference>
<dbReference type="FunFam" id="3.30.565.10:FF:000204">
    <property type="entry name" value="Heat shock protein HSP 90-beta"/>
    <property type="match status" value="1"/>
</dbReference>
<dbReference type="Gene3D" id="3.30.230.80">
    <property type="match status" value="1"/>
</dbReference>
<dbReference type="Gene3D" id="3.40.50.11260">
    <property type="match status" value="1"/>
</dbReference>
<dbReference type="Gene3D" id="1.20.120.790">
    <property type="entry name" value="Heat shock protein 90, C-terminal domain"/>
    <property type="match status" value="1"/>
</dbReference>
<dbReference type="Gene3D" id="3.30.565.10">
    <property type="entry name" value="Histidine kinase-like ATPase, C-terminal domain"/>
    <property type="match status" value="1"/>
</dbReference>
<dbReference type="HAMAP" id="MF_00505">
    <property type="entry name" value="HSP90"/>
    <property type="match status" value="1"/>
</dbReference>
<dbReference type="InterPro" id="IPR036890">
    <property type="entry name" value="HATPase_C_sf"/>
</dbReference>
<dbReference type="InterPro" id="IPR019805">
    <property type="entry name" value="Heat_shock_protein_90_CS"/>
</dbReference>
<dbReference type="InterPro" id="IPR037196">
    <property type="entry name" value="HSP90_C"/>
</dbReference>
<dbReference type="InterPro" id="IPR001404">
    <property type="entry name" value="Hsp90_fam"/>
</dbReference>
<dbReference type="InterPro" id="IPR020575">
    <property type="entry name" value="Hsp90_N"/>
</dbReference>
<dbReference type="InterPro" id="IPR020568">
    <property type="entry name" value="Ribosomal_Su5_D2-typ_SF"/>
</dbReference>
<dbReference type="NCBIfam" id="NF003555">
    <property type="entry name" value="PRK05218.1"/>
    <property type="match status" value="1"/>
</dbReference>
<dbReference type="PANTHER" id="PTHR11528">
    <property type="entry name" value="HEAT SHOCK PROTEIN 90 FAMILY MEMBER"/>
    <property type="match status" value="1"/>
</dbReference>
<dbReference type="Pfam" id="PF13589">
    <property type="entry name" value="HATPase_c_3"/>
    <property type="match status" value="1"/>
</dbReference>
<dbReference type="Pfam" id="PF00183">
    <property type="entry name" value="HSP90"/>
    <property type="match status" value="1"/>
</dbReference>
<dbReference type="PIRSF" id="PIRSF002583">
    <property type="entry name" value="Hsp90"/>
    <property type="match status" value="1"/>
</dbReference>
<dbReference type="PRINTS" id="PR00775">
    <property type="entry name" value="HEATSHOCK90"/>
</dbReference>
<dbReference type="SMART" id="SM00387">
    <property type="entry name" value="HATPase_c"/>
    <property type="match status" value="1"/>
</dbReference>
<dbReference type="SUPFAM" id="SSF55874">
    <property type="entry name" value="ATPase domain of HSP90 chaperone/DNA topoisomerase II/histidine kinase"/>
    <property type="match status" value="1"/>
</dbReference>
<dbReference type="SUPFAM" id="SSF110942">
    <property type="entry name" value="HSP90 C-terminal domain"/>
    <property type="match status" value="1"/>
</dbReference>
<dbReference type="SUPFAM" id="SSF54211">
    <property type="entry name" value="Ribosomal protein S5 domain 2-like"/>
    <property type="match status" value="1"/>
</dbReference>
<dbReference type="PROSITE" id="PS00298">
    <property type="entry name" value="HSP90"/>
    <property type="match status" value="1"/>
</dbReference>
<keyword id="KW-0007">Acetylation</keyword>
<keyword id="KW-0067">ATP-binding</keyword>
<keyword id="KW-1003">Cell membrane</keyword>
<keyword id="KW-0143">Chaperone</keyword>
<keyword id="KW-0963">Cytoplasm</keyword>
<keyword id="KW-0378">Hydrolase</keyword>
<keyword id="KW-0472">Membrane</keyword>
<keyword id="KW-0496">Mitochondrion</keyword>
<keyword id="KW-0547">Nucleotide-binding</keyword>
<keyword id="KW-0539">Nucleus</keyword>
<keyword id="KW-0597">Phosphoprotein</keyword>
<keyword id="KW-1185">Reference proteome</keyword>
<keyword id="KW-0702">S-nitrosylation</keyword>
<keyword id="KW-0346">Stress response</keyword>
<keyword id="KW-0832">Ubl conjugation</keyword>
<feature type="chain" id="PRO_0000271707" description="Heat shock protein HSP 90-alpha">
    <location>
        <begin position="1"/>
        <end position="733"/>
    </location>
</feature>
<feature type="region of interest" description="Interaction with NR3C1" evidence="3">
    <location>
        <begin position="9"/>
        <end position="236"/>
    </location>
</feature>
<feature type="region of interest" description="Disordered" evidence="5">
    <location>
        <begin position="225"/>
        <end position="279"/>
    </location>
</feature>
<feature type="region of interest" description="Interaction with NR3C1" evidence="3">
    <location>
        <begin position="272"/>
        <end position="617"/>
    </location>
</feature>
<feature type="region of interest" description="Interaction with FLCN and FNIP1" evidence="2">
    <location>
        <begin position="285"/>
        <end position="733"/>
    </location>
</feature>
<feature type="region of interest" description="Interaction with FNIP2 and TSC1" evidence="2">
    <location>
        <begin position="285"/>
        <end position="621"/>
    </location>
</feature>
<feature type="region of interest" description="Interaction with NR1D1" evidence="3">
    <location>
        <begin position="629"/>
        <end position="732"/>
    </location>
</feature>
<feature type="region of interest" description="Required for homodimerization" evidence="2">
    <location>
        <begin position="683"/>
        <end position="733"/>
    </location>
</feature>
<feature type="region of interest" description="Disordered" evidence="5">
    <location>
        <begin position="701"/>
        <end position="733"/>
    </location>
</feature>
<feature type="region of interest" description="Essential for interaction with SMYD3, TSC1 and STIP1/HOP" evidence="2">
    <location>
        <begin position="729"/>
        <end position="733"/>
    </location>
</feature>
<feature type="region of interest" description="Essential for interaction with SGTA and TTC1" evidence="2">
    <location>
        <begin position="730"/>
        <end position="733"/>
    </location>
</feature>
<feature type="short sequence motif" description="TPR repeat-binding" evidence="2">
    <location>
        <begin position="724"/>
        <end position="733"/>
    </location>
</feature>
<feature type="compositionally biased region" description="Acidic residues" evidence="5">
    <location>
        <begin position="230"/>
        <end position="246"/>
    </location>
</feature>
<feature type="compositionally biased region" description="Acidic residues" evidence="5">
    <location>
        <begin position="256"/>
        <end position="269"/>
    </location>
</feature>
<feature type="binding site" evidence="1">
    <location>
        <position position="51"/>
    </location>
    <ligand>
        <name>ATP</name>
        <dbReference type="ChEBI" id="CHEBI:30616"/>
    </ligand>
</feature>
<feature type="binding site" evidence="1">
    <location>
        <position position="93"/>
    </location>
    <ligand>
        <name>ATP</name>
        <dbReference type="ChEBI" id="CHEBI:30616"/>
    </ligand>
</feature>
<feature type="binding site" evidence="1">
    <location>
        <position position="112"/>
    </location>
    <ligand>
        <name>ATP</name>
        <dbReference type="ChEBI" id="CHEBI:30616"/>
    </ligand>
</feature>
<feature type="binding site" evidence="1">
    <location>
        <position position="138"/>
    </location>
    <ligand>
        <name>ATP</name>
        <dbReference type="ChEBI" id="CHEBI:30616"/>
    </ligand>
</feature>
<feature type="binding site" evidence="1">
    <location>
        <position position="401"/>
    </location>
    <ligand>
        <name>ATP</name>
        <dbReference type="ChEBI" id="CHEBI:30616"/>
    </ligand>
</feature>
<feature type="modified residue" description="Phosphothreonine; by PRKDC" evidence="2">
    <location>
        <position position="5"/>
    </location>
</feature>
<feature type="modified residue" description="Phosphothreonine; by PRKDC" evidence="2">
    <location>
        <position position="7"/>
    </location>
</feature>
<feature type="modified residue" description="N6-acetyllysine" evidence="3">
    <location>
        <position position="58"/>
    </location>
</feature>
<feature type="modified residue" description="N6-acetyllysine" evidence="3">
    <location>
        <position position="84"/>
    </location>
</feature>
<feature type="modified residue" description="Phosphoserine" evidence="2">
    <location>
        <position position="231"/>
    </location>
</feature>
<feature type="modified residue" description="Phosphoserine" evidence="2">
    <location>
        <position position="252"/>
    </location>
</feature>
<feature type="modified residue" description="Phosphoserine" evidence="2">
    <location>
        <position position="263"/>
    </location>
</feature>
<feature type="modified residue" description="Phosphotyrosine" evidence="3">
    <location>
        <position position="314"/>
    </location>
</feature>
<feature type="modified residue" description="N6-acetyllysine" evidence="2">
    <location>
        <position position="444"/>
    </location>
</feature>
<feature type="modified residue" description="Phosphoserine" evidence="4">
    <location>
        <position position="454"/>
    </location>
</feature>
<feature type="modified residue" description="N6-acetyllysine" evidence="2">
    <location>
        <position position="459"/>
    </location>
</feature>
<feature type="modified residue" description="Phosphoserine" evidence="2">
    <location>
        <position position="477"/>
    </location>
</feature>
<feature type="modified residue" description="N6-acetyllysine" evidence="2">
    <location>
        <position position="490"/>
    </location>
</feature>
<feature type="modified residue" description="Phosphotyrosine" evidence="3">
    <location>
        <position position="493"/>
    </location>
</feature>
<feature type="modified residue" description="N6-acetyllysine" evidence="2">
    <location>
        <position position="586"/>
    </location>
</feature>
<feature type="modified residue" description="S-nitrosocysteine" evidence="2">
    <location>
        <position position="599"/>
    </location>
</feature>
<feature type="modified residue" description="Phosphoserine" evidence="2">
    <location>
        <position position="642"/>
    </location>
</feature>
<comment type="function">
    <text evidence="2">Molecular chaperone that promotes the maturation, structural maintenance and proper regulation of specific target proteins involved for instance in cell cycle control and signal transduction. Undergoes a functional cycle that is linked to its ATPase activity which is essential for its chaperone activity. This cycle probably induces conformational changes in the client proteins, thereby causing their activation. Interacts dynamically with various co-chaperones that modulate its substrate recognition, ATPase cycle and chaperone function. Engages with a range of client protein classes via its interaction with various co-chaperone proteins or complexes, that act as adapters, simultaneously able to interact with the specific client and the central chaperone itself. Recruitment of ATP and co-chaperone followed by client protein forms a functional chaperone. After the completion of the chaperoning process, properly folded client protein and co-chaperone leave HSP90 in an ADP-bound partially open conformation and finally, ADP is released from HSP90 which acquires an open conformation for the next cycle. Plays a critical role in mitochondrial import, delivers preproteins to the mitochondrial import receptor TOMM70. Apart from its chaperone activity, it also plays a role in the regulation of the transcription machinery. HSP90 and its co-chaperones modulate transcription at least at three different levels. In the first place, they alter the steady-state levels of certain transcription factors in response to various physiological cues. Second, they modulate the activity of certain epigenetic modifiers, such as histone deacetylases or DNA methyl transferases, and thereby respond to the change in the environment. Third, they participate in the eviction of histones from the promoter region of certain genes and thereby turn on gene expression. Binds bacterial lipopolysaccharide (LPS) and mediates LPS-induced inflammatory response, including TNF secretion by monocytes. Antagonizes STUB1-mediated inhibition of TGF-beta signaling via inhibition of STUB1-mediated SMAD3 ubiquitination and degradation. Mediates the association of TOMM70 with IRF3 or TBK1 in mitochondrial outer membrane which promotes host antiviral response.</text>
</comment>
<comment type="catalytic activity">
    <reaction evidence="2">
        <text>ATP + H2O = ADP + phosphate + H(+)</text>
        <dbReference type="Rhea" id="RHEA:13065"/>
        <dbReference type="ChEBI" id="CHEBI:15377"/>
        <dbReference type="ChEBI" id="CHEBI:15378"/>
        <dbReference type="ChEBI" id="CHEBI:30616"/>
        <dbReference type="ChEBI" id="CHEBI:43474"/>
        <dbReference type="ChEBI" id="CHEBI:456216"/>
        <dbReference type="EC" id="3.6.4.10"/>
    </reaction>
</comment>
<comment type="activity regulation">
    <text evidence="2">In the resting state, through the dimerization of its C-terminal domain, HSP90 forms a homodimer which is defined as the open conformation. Upon ATP-binding, the N-terminal domain undergoes significant conformational changes and comes in contact to form an active closed conformation. After HSP90 finishes its chaperoning tasks of assisting the proper folding, stabilization and activation of client proteins under the active state, ATP molecule is hydrolyzed to ADP which then dissociates from HSP90 and directs the protein back to the resting state. Co-chaperone TSC1 promotes ATP binding and inhibits HSP90AA1 ATPase activity. Binding to phosphorylated AHSA1 promotes HSP90AA1 ATPase activity. Inhibited by geldanamycin, Ganetespib (STA-9090) and SNX-2112.</text>
</comment>
<comment type="subunit">
    <text evidence="2 3 4">Homodimer. Identified in NR3C1/GCR steroid receptor-chaperone complexes formed at least by NR3C1, HSP90AA1 and a variety of proteins containing TPR repeats such as FKBP4, FKBP5, PPID, PPP5C or STIP1. Forms a complex containing HSP90AA1, TSC1 and TSC2; TSC1 is required to recruit TCS2 to the complex. The closed form interacts (via the middle domain and TPR repeat-binding motif) with co-chaperone TSC1 (via C-terminus). Interacts with TOM34. Interacts with TERT; the interaction, together with PTGES3, is required for correct assembly and stabilization of the TERT holoenzyme complex. Interacts with CHORDC1 and DNAJC7. Interacts with STUB1 and UBE2N; may couple the chaperone and ubiquitination systems. Interacts (via TPR repeat-binding motif) with PPP5C (via TPR repeats); the interaction is direct and activates PPP5C phosphatase activity. Following LPS binding, may form a complex with CXCR4, GDF5 and HSPA8. Interacts with KSR1. Interacts with co-chaperone CDC37 (via C-terminus); the interaction inhibits HSP90AA1 ATPase activity. May interact with NWD1. Interacts with FNIP1 and FNIP2; the interaction inhibits HSP90AA1 ATPase activity. Interacts with co-chaperone AHSA1 (phosphorylated on 'Tyr-223'); the interaction activates HSP90AA1 ATPase activity and results in the dissociation of TSC1 from HSP90AA1. Interacts with FLCN in the presence of FNIP1. Interacts with HSP70, STIP1 and PTGES3. Interacts with SMYD3; this interaction enhances SMYD3 histone-lysine N-methyltransferase. Interacts with SGTA (via TPR repeats). Interacts with TTC1 (via TPR repeats). Interacts with HSF1 in an ATP-dependent manner. Interacts with MET; the interaction suppresses MET kinase activity. Interacts with ERBB2 in an ATP-dependent manner; the interaction suppresses ERBB2 kinase activity. Interacts with HIF1A, KEAP1 and RHOBTB2. Interacts with HSF1; this interaction is decreased in a IER5-dependent manner, promoting HSF1 accumulation in the nucleus, homotrimerization and DNA-binding activities. Interacts with STUB1 and SMAD3. Interacts with HSP90AB1; interaction is constitutive (By similarity). Interacts with HECTD1 (via N-terminus) (By similarity). Interacts with NR3C1 (via domain NR LBD) and NR1D1 (via domain NR LBD) (By similarity). Interacts with NLPR12 (By similarity). Interacts with PDCL3 (By similarity). Interacts with TOMM70; the interaction is required for preprotein mitochondrial import. Interacts with TOMM70, IRF3 and TBK1; the interactions are direct and mediate the association of TOMM70 with IRF3 and TBK1 (By similarity). Forms a complex with ASL, ASS1 and NOS2; the complex regulates cell-autonomous L-arginine synthesis and citrulline recycling while channeling extracellular L-arginine to nitric oxide synthesis pathway.</text>
</comment>
<comment type="subcellular location">
    <subcellularLocation>
        <location evidence="3">Nucleus</location>
    </subcellularLocation>
    <subcellularLocation>
        <location evidence="3">Cytoplasm</location>
    </subcellularLocation>
    <subcellularLocation>
        <location evidence="2">Melanosome</location>
    </subcellularLocation>
    <subcellularLocation>
        <location evidence="2">Cell membrane</location>
    </subcellularLocation>
    <subcellularLocation>
        <location evidence="2">Mitochondrion</location>
    </subcellularLocation>
</comment>
<comment type="domain">
    <text evidence="2">The TPR repeat-binding motif mediates interaction with TPR repeat-containing proteins like the co-chaperone STUB1.</text>
</comment>
<comment type="PTM">
    <text evidence="2">ISGylated.</text>
</comment>
<comment type="PTM">
    <text evidence="2">S-nitrosylated; negatively regulates the ATPase activity and the activation of eNOS by HSP90AA1.</text>
</comment>
<comment type="PTM">
    <text evidence="3">Ubiquitinated via 'Lys-63'-linked polyubiquitination by HECTD1. Ubiquitination promotes translocation into the cytoplasm away from the membrane and secretory pathways.</text>
</comment>
<comment type="similarity">
    <text evidence="6">Belongs to the heat shock protein 90 family.</text>
</comment>
<proteinExistence type="evidence at transcript level"/>
<sequence length="733" mass="84789">MPEETQTQDQPMEEEEVETFAFQAEIAQLMSLIINTFYSNKEIFLRELISNSSDALDKIRYESLTDPSKLDSGKELHINLIPNKQDRTLTIVDTGIGMTKADLINNLGTIAKSGTKAFMEALQAGADISMIGQFGVGFYSAYLVAEKVTVITKHNDDEQYAWESSAGGSFTVRTDTGEPMGRGTKVILHLKEDQTEYLEERRIKEIVKKHSQFIGYPITLFVEKERDKEVSDDEAEEKEDKEEEKEKEEKESEDKPEIEDVGSDEEEEEKKDGDKKKKKKIKEKYIDQEELNKTKPIWTRNPDDITNEEYGEFYKSLTNDWEDHLAVKHFSVEGQLEFRALLFVPRRAPFDLFENRKKKNNIKLYVRRVFIMDNCEELIPEYLNFIRGVVDSEDLPLNISREMLQQSKILKVIRKNLVKKCLELFTELAEDKENYKKFYEQFSKNIKLGIHEDSQNRKKLSELLRYYTSASGDEMVSLKDYCTRMKENQKHIYYITGETKDQVANSAFVERLRKHGLEVIYMIEPIDEYCVQQLKEFEGKTLVSVTKEGLELPEDEEEKKKQEEKKTKFENLCKIMKDILEKKVEKVVVSNRLVTSPCCIVTSTYGWTANMERIMKAQALRDNSTMGYMAAKKHLEINPDHSIIETLRQKAEADKNDKSVKDLVILLYETALLSSGFSLEDPQTHANRIYRMIKLGLGIDEDDPTADDTSAAVTEEMPPLEGDDDTSRMEEVD</sequence>
<evidence type="ECO:0000250" key="1"/>
<evidence type="ECO:0000250" key="2">
    <source>
        <dbReference type="UniProtKB" id="P07900"/>
    </source>
</evidence>
<evidence type="ECO:0000250" key="3">
    <source>
        <dbReference type="UniProtKB" id="P07901"/>
    </source>
</evidence>
<evidence type="ECO:0000250" key="4">
    <source>
        <dbReference type="UniProtKB" id="P82995"/>
    </source>
</evidence>
<evidence type="ECO:0000256" key="5">
    <source>
        <dbReference type="SAM" id="MobiDB-lite"/>
    </source>
</evidence>
<evidence type="ECO:0000305" key="6"/>
<organism>
    <name type="scientific">Macaca fascicularis</name>
    <name type="common">Crab-eating macaque</name>
    <name type="synonym">Cynomolgus monkey</name>
    <dbReference type="NCBI Taxonomy" id="9541"/>
    <lineage>
        <taxon>Eukaryota</taxon>
        <taxon>Metazoa</taxon>
        <taxon>Chordata</taxon>
        <taxon>Craniata</taxon>
        <taxon>Vertebrata</taxon>
        <taxon>Euteleostomi</taxon>
        <taxon>Mammalia</taxon>
        <taxon>Eutheria</taxon>
        <taxon>Euarchontoglires</taxon>
        <taxon>Primates</taxon>
        <taxon>Haplorrhini</taxon>
        <taxon>Catarrhini</taxon>
        <taxon>Cercopithecidae</taxon>
        <taxon>Cercopithecinae</taxon>
        <taxon>Macaca</taxon>
    </lineage>
</organism>